<keyword id="KW-0004">4Fe-4S</keyword>
<keyword id="KW-0963">Cytoplasm</keyword>
<keyword id="KW-0408">Iron</keyword>
<keyword id="KW-0411">Iron-sulfur</keyword>
<keyword id="KW-0479">Metal-binding</keyword>
<keyword id="KW-0949">S-adenosyl-L-methionine</keyword>
<keyword id="KW-0808">Transferase</keyword>
<dbReference type="EC" id="2.8.1.8" evidence="1"/>
<dbReference type="EMBL" id="CP000802">
    <property type="protein sequence ID" value="ABV05058.1"/>
    <property type="molecule type" value="Genomic_DNA"/>
</dbReference>
<dbReference type="RefSeq" id="WP_000042632.1">
    <property type="nucleotide sequence ID" value="NC_009800.1"/>
</dbReference>
<dbReference type="SMR" id="A7ZXQ4"/>
<dbReference type="GeneID" id="93776854"/>
<dbReference type="KEGG" id="ecx:EcHS_A0679"/>
<dbReference type="HOGENOM" id="CLU_033144_2_1_6"/>
<dbReference type="UniPathway" id="UPA00538">
    <property type="reaction ID" value="UER00593"/>
</dbReference>
<dbReference type="GO" id="GO:0005737">
    <property type="term" value="C:cytoplasm"/>
    <property type="evidence" value="ECO:0007669"/>
    <property type="project" value="UniProtKB-SubCell"/>
</dbReference>
<dbReference type="GO" id="GO:0051539">
    <property type="term" value="F:4 iron, 4 sulfur cluster binding"/>
    <property type="evidence" value="ECO:0007669"/>
    <property type="project" value="UniProtKB-UniRule"/>
</dbReference>
<dbReference type="GO" id="GO:0016992">
    <property type="term" value="F:lipoate synthase activity"/>
    <property type="evidence" value="ECO:0007669"/>
    <property type="project" value="UniProtKB-UniRule"/>
</dbReference>
<dbReference type="GO" id="GO:0046872">
    <property type="term" value="F:metal ion binding"/>
    <property type="evidence" value="ECO:0007669"/>
    <property type="project" value="UniProtKB-KW"/>
</dbReference>
<dbReference type="CDD" id="cd01335">
    <property type="entry name" value="Radical_SAM"/>
    <property type="match status" value="1"/>
</dbReference>
<dbReference type="FunFam" id="3.20.20.70:FF:000023">
    <property type="entry name" value="Lipoyl synthase"/>
    <property type="match status" value="1"/>
</dbReference>
<dbReference type="Gene3D" id="3.20.20.70">
    <property type="entry name" value="Aldolase class I"/>
    <property type="match status" value="1"/>
</dbReference>
<dbReference type="HAMAP" id="MF_00206">
    <property type="entry name" value="Lipoyl_synth"/>
    <property type="match status" value="1"/>
</dbReference>
<dbReference type="InterPro" id="IPR013785">
    <property type="entry name" value="Aldolase_TIM"/>
</dbReference>
<dbReference type="InterPro" id="IPR006638">
    <property type="entry name" value="Elp3/MiaA/NifB-like_rSAM"/>
</dbReference>
<dbReference type="InterPro" id="IPR031691">
    <property type="entry name" value="LIAS_N"/>
</dbReference>
<dbReference type="InterPro" id="IPR003698">
    <property type="entry name" value="Lipoyl_synth"/>
</dbReference>
<dbReference type="InterPro" id="IPR007197">
    <property type="entry name" value="rSAM"/>
</dbReference>
<dbReference type="NCBIfam" id="TIGR00510">
    <property type="entry name" value="lipA"/>
    <property type="match status" value="1"/>
</dbReference>
<dbReference type="NCBIfam" id="NF004019">
    <property type="entry name" value="PRK05481.1"/>
    <property type="match status" value="1"/>
</dbReference>
<dbReference type="NCBIfam" id="NF009544">
    <property type="entry name" value="PRK12928.1"/>
    <property type="match status" value="1"/>
</dbReference>
<dbReference type="PANTHER" id="PTHR10949">
    <property type="entry name" value="LIPOYL SYNTHASE"/>
    <property type="match status" value="1"/>
</dbReference>
<dbReference type="PANTHER" id="PTHR10949:SF0">
    <property type="entry name" value="LIPOYL SYNTHASE, MITOCHONDRIAL"/>
    <property type="match status" value="1"/>
</dbReference>
<dbReference type="Pfam" id="PF16881">
    <property type="entry name" value="LIAS_N"/>
    <property type="match status" value="1"/>
</dbReference>
<dbReference type="Pfam" id="PF04055">
    <property type="entry name" value="Radical_SAM"/>
    <property type="match status" value="1"/>
</dbReference>
<dbReference type="PIRSF" id="PIRSF005963">
    <property type="entry name" value="Lipoyl_synth"/>
    <property type="match status" value="1"/>
</dbReference>
<dbReference type="SFLD" id="SFLDF00271">
    <property type="entry name" value="lipoyl_synthase"/>
    <property type="match status" value="1"/>
</dbReference>
<dbReference type="SFLD" id="SFLDG01058">
    <property type="entry name" value="lipoyl_synthase_like"/>
    <property type="match status" value="1"/>
</dbReference>
<dbReference type="SMART" id="SM00729">
    <property type="entry name" value="Elp3"/>
    <property type="match status" value="1"/>
</dbReference>
<dbReference type="SUPFAM" id="SSF102114">
    <property type="entry name" value="Radical SAM enzymes"/>
    <property type="match status" value="1"/>
</dbReference>
<dbReference type="PROSITE" id="PS51918">
    <property type="entry name" value="RADICAL_SAM"/>
    <property type="match status" value="1"/>
</dbReference>
<protein>
    <recommendedName>
        <fullName evidence="1">Lipoyl synthase</fullName>
        <ecNumber evidence="1">2.8.1.8</ecNumber>
    </recommendedName>
    <alternativeName>
        <fullName evidence="1">Lip-syn</fullName>
        <shortName evidence="1">LS</shortName>
    </alternativeName>
    <alternativeName>
        <fullName evidence="1">Lipoate synthase</fullName>
    </alternativeName>
    <alternativeName>
        <fullName evidence="1">Lipoic acid synthase</fullName>
    </alternativeName>
    <alternativeName>
        <fullName evidence="1">Sulfur insertion protein LipA</fullName>
    </alternativeName>
</protein>
<evidence type="ECO:0000255" key="1">
    <source>
        <dbReference type="HAMAP-Rule" id="MF_00206"/>
    </source>
</evidence>
<evidence type="ECO:0000255" key="2">
    <source>
        <dbReference type="PROSITE-ProRule" id="PRU01266"/>
    </source>
</evidence>
<gene>
    <name evidence="1" type="primary">lipA</name>
    <name type="ordered locus">EcHS_A0679</name>
</gene>
<accession>A7ZXQ4</accession>
<sequence length="321" mass="36072">MSKPIVMERGVKYRDADKMALIPVKNVATEREALLRKPEWMKIKLPADSTRIQGIKAAMRKNGLHSVCEEASCPNLAECFNHGTATFMILGAICTRRCPFCDVAHGRPVAPDANEPVKLAQTIADMALRYVVITSVDRDDLRDGGAQHFADCITAIREKSPQIKIETLVPDFRGRMDRALDILTATPPDVFNHNLENVPRIYRQVRPGADYNWSLKLLERFKEAHPEIPTKSGLMVGLGETNEEIIEVMRDLRRHGVTMLTLGQYLQPSRHHLPVQRYVSPDEFDEMKAEALAMGFTHAACGPFVRSSYHADLQAKGMEVK</sequence>
<name>LIPA_ECOHS</name>
<organism>
    <name type="scientific">Escherichia coli O9:H4 (strain HS)</name>
    <dbReference type="NCBI Taxonomy" id="331112"/>
    <lineage>
        <taxon>Bacteria</taxon>
        <taxon>Pseudomonadati</taxon>
        <taxon>Pseudomonadota</taxon>
        <taxon>Gammaproteobacteria</taxon>
        <taxon>Enterobacterales</taxon>
        <taxon>Enterobacteriaceae</taxon>
        <taxon>Escherichia</taxon>
    </lineage>
</organism>
<comment type="function">
    <text evidence="1">Catalyzes the radical-mediated insertion of two sulfur atoms into the C-6 and C-8 positions of the octanoyl moiety bound to the lipoyl domains of lipoate-dependent enzymes, thereby converting the octanoylated domains into lipoylated derivatives.</text>
</comment>
<comment type="catalytic activity">
    <reaction evidence="1">
        <text>[[Fe-S] cluster scaffold protein carrying a second [4Fe-4S](2+) cluster] + N(6)-octanoyl-L-lysyl-[protein] + 2 oxidized [2Fe-2S]-[ferredoxin] + 2 S-adenosyl-L-methionine + 4 H(+) = [[Fe-S] cluster scaffold protein] + N(6)-[(R)-dihydrolipoyl]-L-lysyl-[protein] + 4 Fe(3+) + 2 hydrogen sulfide + 2 5'-deoxyadenosine + 2 L-methionine + 2 reduced [2Fe-2S]-[ferredoxin]</text>
        <dbReference type="Rhea" id="RHEA:16585"/>
        <dbReference type="Rhea" id="RHEA-COMP:9928"/>
        <dbReference type="Rhea" id="RHEA-COMP:10000"/>
        <dbReference type="Rhea" id="RHEA-COMP:10001"/>
        <dbReference type="Rhea" id="RHEA-COMP:10475"/>
        <dbReference type="Rhea" id="RHEA-COMP:14568"/>
        <dbReference type="Rhea" id="RHEA-COMP:14569"/>
        <dbReference type="ChEBI" id="CHEBI:15378"/>
        <dbReference type="ChEBI" id="CHEBI:17319"/>
        <dbReference type="ChEBI" id="CHEBI:29034"/>
        <dbReference type="ChEBI" id="CHEBI:29919"/>
        <dbReference type="ChEBI" id="CHEBI:33722"/>
        <dbReference type="ChEBI" id="CHEBI:33737"/>
        <dbReference type="ChEBI" id="CHEBI:33738"/>
        <dbReference type="ChEBI" id="CHEBI:57844"/>
        <dbReference type="ChEBI" id="CHEBI:59789"/>
        <dbReference type="ChEBI" id="CHEBI:78809"/>
        <dbReference type="ChEBI" id="CHEBI:83100"/>
        <dbReference type="EC" id="2.8.1.8"/>
    </reaction>
</comment>
<comment type="cofactor">
    <cofactor evidence="1">
        <name>[4Fe-4S] cluster</name>
        <dbReference type="ChEBI" id="CHEBI:49883"/>
    </cofactor>
    <text evidence="1">Binds 2 [4Fe-4S] clusters per subunit. One cluster is coordinated with 3 cysteines and an exchangeable S-adenosyl-L-methionine.</text>
</comment>
<comment type="pathway">
    <text evidence="1">Protein modification; protein lipoylation via endogenous pathway; protein N(6)-(lipoyl)lysine from octanoyl-[acyl-carrier-protein]: step 2/2.</text>
</comment>
<comment type="subcellular location">
    <subcellularLocation>
        <location evidence="1">Cytoplasm</location>
    </subcellularLocation>
</comment>
<comment type="similarity">
    <text evidence="1">Belongs to the radical SAM superfamily. Lipoyl synthase family.</text>
</comment>
<feature type="chain" id="PRO_1000058575" description="Lipoyl synthase">
    <location>
        <begin position="1"/>
        <end position="321"/>
    </location>
</feature>
<feature type="domain" description="Radical SAM core" evidence="2">
    <location>
        <begin position="80"/>
        <end position="297"/>
    </location>
</feature>
<feature type="binding site" evidence="1">
    <location>
        <position position="68"/>
    </location>
    <ligand>
        <name>[4Fe-4S] cluster</name>
        <dbReference type="ChEBI" id="CHEBI:49883"/>
        <label>1</label>
    </ligand>
</feature>
<feature type="binding site" evidence="1">
    <location>
        <position position="73"/>
    </location>
    <ligand>
        <name>[4Fe-4S] cluster</name>
        <dbReference type="ChEBI" id="CHEBI:49883"/>
        <label>1</label>
    </ligand>
</feature>
<feature type="binding site" evidence="1">
    <location>
        <position position="79"/>
    </location>
    <ligand>
        <name>[4Fe-4S] cluster</name>
        <dbReference type="ChEBI" id="CHEBI:49883"/>
        <label>1</label>
    </ligand>
</feature>
<feature type="binding site" evidence="1">
    <location>
        <position position="94"/>
    </location>
    <ligand>
        <name>[4Fe-4S] cluster</name>
        <dbReference type="ChEBI" id="CHEBI:49883"/>
        <label>2</label>
        <note>4Fe-4S-S-AdoMet</note>
    </ligand>
</feature>
<feature type="binding site" evidence="1">
    <location>
        <position position="98"/>
    </location>
    <ligand>
        <name>[4Fe-4S] cluster</name>
        <dbReference type="ChEBI" id="CHEBI:49883"/>
        <label>2</label>
        <note>4Fe-4S-S-AdoMet</note>
    </ligand>
</feature>
<feature type="binding site" evidence="1">
    <location>
        <position position="101"/>
    </location>
    <ligand>
        <name>[4Fe-4S] cluster</name>
        <dbReference type="ChEBI" id="CHEBI:49883"/>
        <label>2</label>
        <note>4Fe-4S-S-AdoMet</note>
    </ligand>
</feature>
<feature type="binding site" evidence="1">
    <location>
        <position position="308"/>
    </location>
    <ligand>
        <name>[4Fe-4S] cluster</name>
        <dbReference type="ChEBI" id="CHEBI:49883"/>
        <label>1</label>
    </ligand>
</feature>
<proteinExistence type="inferred from homology"/>
<reference key="1">
    <citation type="journal article" date="2008" name="J. Bacteriol.">
        <title>The pangenome structure of Escherichia coli: comparative genomic analysis of E. coli commensal and pathogenic isolates.</title>
        <authorList>
            <person name="Rasko D.A."/>
            <person name="Rosovitz M.J."/>
            <person name="Myers G.S.A."/>
            <person name="Mongodin E.F."/>
            <person name="Fricke W.F."/>
            <person name="Gajer P."/>
            <person name="Crabtree J."/>
            <person name="Sebaihia M."/>
            <person name="Thomson N.R."/>
            <person name="Chaudhuri R."/>
            <person name="Henderson I.R."/>
            <person name="Sperandio V."/>
            <person name="Ravel J."/>
        </authorList>
    </citation>
    <scope>NUCLEOTIDE SEQUENCE [LARGE SCALE GENOMIC DNA]</scope>
    <source>
        <strain>HS</strain>
    </source>
</reference>